<reference key="1">
    <citation type="submission" date="2008-01" db="EMBL/GenBank/DDBJ databases">
        <title>Complete sequence of chromosome of Caulobacter sp. K31.</title>
        <authorList>
            <consortium name="US DOE Joint Genome Institute"/>
            <person name="Copeland A."/>
            <person name="Lucas S."/>
            <person name="Lapidus A."/>
            <person name="Barry K."/>
            <person name="Glavina del Rio T."/>
            <person name="Dalin E."/>
            <person name="Tice H."/>
            <person name="Pitluck S."/>
            <person name="Bruce D."/>
            <person name="Goodwin L."/>
            <person name="Thompson L.S."/>
            <person name="Brettin T."/>
            <person name="Detter J.C."/>
            <person name="Han C."/>
            <person name="Schmutz J."/>
            <person name="Larimer F."/>
            <person name="Land M."/>
            <person name="Hauser L."/>
            <person name="Kyrpides N."/>
            <person name="Kim E."/>
            <person name="Stephens C."/>
            <person name="Richardson P."/>
        </authorList>
    </citation>
    <scope>NUCLEOTIDE SEQUENCE [LARGE SCALE GENOMIC DNA]</scope>
    <source>
        <strain>K31</strain>
    </source>
</reference>
<organism>
    <name type="scientific">Caulobacter sp. (strain K31)</name>
    <dbReference type="NCBI Taxonomy" id="366602"/>
    <lineage>
        <taxon>Bacteria</taxon>
        <taxon>Pseudomonadati</taxon>
        <taxon>Pseudomonadota</taxon>
        <taxon>Alphaproteobacteria</taxon>
        <taxon>Caulobacterales</taxon>
        <taxon>Caulobacteraceae</taxon>
        <taxon>Caulobacter</taxon>
    </lineage>
</organism>
<name>RPOZ_CAUSK</name>
<evidence type="ECO:0000255" key="1">
    <source>
        <dbReference type="HAMAP-Rule" id="MF_00366"/>
    </source>
</evidence>
<feature type="chain" id="PRO_1000079620" description="DNA-directed RNA polymerase subunit omega">
    <location>
        <begin position="1"/>
        <end position="119"/>
    </location>
</feature>
<sequence>MARVTVEDCVEKVPNRFALVLLSAHRARGISAGASLLVDRDNDKNPVVALREIADDVVDHEGLREQLITTLQRVDEHTEAEEEAETLALLADPTHMQMSELELVRALQSDRDGGQEERY</sequence>
<dbReference type="EC" id="2.7.7.6" evidence="1"/>
<dbReference type="EMBL" id="CP000927">
    <property type="protein sequence ID" value="ABZ70856.1"/>
    <property type="molecule type" value="Genomic_DNA"/>
</dbReference>
<dbReference type="SMR" id="B0T3H0"/>
<dbReference type="STRING" id="366602.Caul_1727"/>
<dbReference type="KEGG" id="cak:Caul_1727"/>
<dbReference type="eggNOG" id="COG1758">
    <property type="taxonomic scope" value="Bacteria"/>
</dbReference>
<dbReference type="HOGENOM" id="CLU_125406_2_0_5"/>
<dbReference type="OrthoDB" id="9796300at2"/>
<dbReference type="GO" id="GO:0000428">
    <property type="term" value="C:DNA-directed RNA polymerase complex"/>
    <property type="evidence" value="ECO:0007669"/>
    <property type="project" value="UniProtKB-KW"/>
</dbReference>
<dbReference type="GO" id="GO:0003677">
    <property type="term" value="F:DNA binding"/>
    <property type="evidence" value="ECO:0007669"/>
    <property type="project" value="UniProtKB-UniRule"/>
</dbReference>
<dbReference type="GO" id="GO:0003899">
    <property type="term" value="F:DNA-directed RNA polymerase activity"/>
    <property type="evidence" value="ECO:0007669"/>
    <property type="project" value="UniProtKB-UniRule"/>
</dbReference>
<dbReference type="GO" id="GO:0006351">
    <property type="term" value="P:DNA-templated transcription"/>
    <property type="evidence" value="ECO:0007669"/>
    <property type="project" value="UniProtKB-UniRule"/>
</dbReference>
<dbReference type="Gene3D" id="3.90.940.10">
    <property type="match status" value="1"/>
</dbReference>
<dbReference type="HAMAP" id="MF_00366">
    <property type="entry name" value="RNApol_bact_RpoZ"/>
    <property type="match status" value="1"/>
</dbReference>
<dbReference type="InterPro" id="IPR003716">
    <property type="entry name" value="DNA-dir_RNA_pol_omega"/>
</dbReference>
<dbReference type="InterPro" id="IPR006110">
    <property type="entry name" value="Pol_omega/Rpo6/RPB6"/>
</dbReference>
<dbReference type="InterPro" id="IPR036161">
    <property type="entry name" value="RPB6/omega-like_sf"/>
</dbReference>
<dbReference type="NCBIfam" id="TIGR00690">
    <property type="entry name" value="rpoZ"/>
    <property type="match status" value="1"/>
</dbReference>
<dbReference type="PANTHER" id="PTHR34476">
    <property type="entry name" value="DNA-DIRECTED RNA POLYMERASE SUBUNIT OMEGA"/>
    <property type="match status" value="1"/>
</dbReference>
<dbReference type="PANTHER" id="PTHR34476:SF1">
    <property type="entry name" value="DNA-DIRECTED RNA POLYMERASE SUBUNIT OMEGA"/>
    <property type="match status" value="1"/>
</dbReference>
<dbReference type="Pfam" id="PF01192">
    <property type="entry name" value="RNA_pol_Rpb6"/>
    <property type="match status" value="1"/>
</dbReference>
<dbReference type="SMART" id="SM01409">
    <property type="entry name" value="RNA_pol_Rpb6"/>
    <property type="match status" value="1"/>
</dbReference>
<dbReference type="SUPFAM" id="SSF63562">
    <property type="entry name" value="RPB6/omega subunit-like"/>
    <property type="match status" value="1"/>
</dbReference>
<keyword id="KW-0240">DNA-directed RNA polymerase</keyword>
<keyword id="KW-0548">Nucleotidyltransferase</keyword>
<keyword id="KW-0804">Transcription</keyword>
<keyword id="KW-0808">Transferase</keyword>
<gene>
    <name evidence="1" type="primary">rpoZ</name>
    <name type="ordered locus">Caul_1727</name>
</gene>
<proteinExistence type="inferred from homology"/>
<comment type="function">
    <text evidence="1">Promotes RNA polymerase assembly. Latches the N- and C-terminal regions of the beta' subunit thereby facilitating its interaction with the beta and alpha subunits.</text>
</comment>
<comment type="catalytic activity">
    <reaction evidence="1">
        <text>RNA(n) + a ribonucleoside 5'-triphosphate = RNA(n+1) + diphosphate</text>
        <dbReference type="Rhea" id="RHEA:21248"/>
        <dbReference type="Rhea" id="RHEA-COMP:14527"/>
        <dbReference type="Rhea" id="RHEA-COMP:17342"/>
        <dbReference type="ChEBI" id="CHEBI:33019"/>
        <dbReference type="ChEBI" id="CHEBI:61557"/>
        <dbReference type="ChEBI" id="CHEBI:140395"/>
        <dbReference type="EC" id="2.7.7.6"/>
    </reaction>
</comment>
<comment type="subunit">
    <text evidence="1">The RNAP catalytic core consists of 2 alpha, 1 beta, 1 beta' and 1 omega subunit. When a sigma factor is associated with the core the holoenzyme is formed, which can initiate transcription.</text>
</comment>
<comment type="similarity">
    <text evidence="1">Belongs to the RNA polymerase subunit omega family.</text>
</comment>
<accession>B0T3H0</accession>
<protein>
    <recommendedName>
        <fullName evidence="1">DNA-directed RNA polymerase subunit omega</fullName>
        <shortName evidence="1">RNAP omega subunit</shortName>
        <ecNumber evidence="1">2.7.7.6</ecNumber>
    </recommendedName>
    <alternativeName>
        <fullName evidence="1">RNA polymerase omega subunit</fullName>
    </alternativeName>
    <alternativeName>
        <fullName evidence="1">Transcriptase subunit omega</fullName>
    </alternativeName>
</protein>